<organism>
    <name type="scientific">Synechococcus elongatus (strain ATCC 33912 / PCC 7942 / FACHB-805)</name>
    <name type="common">Anacystis nidulans R2</name>
    <dbReference type="NCBI Taxonomy" id="1140"/>
    <lineage>
        <taxon>Bacteria</taxon>
        <taxon>Bacillati</taxon>
        <taxon>Cyanobacteriota</taxon>
        <taxon>Cyanophyceae</taxon>
        <taxon>Synechococcales</taxon>
        <taxon>Synechococcaceae</taxon>
        <taxon>Synechococcus</taxon>
    </lineage>
</organism>
<evidence type="ECO:0000255" key="1">
    <source>
        <dbReference type="HAMAP-Rule" id="MF_00262"/>
    </source>
</evidence>
<feature type="chain" id="PRO_0000298202" description="Cell division topological specificity factor">
    <location>
        <begin position="1"/>
        <end position="91"/>
    </location>
</feature>
<accession>Q31PU2</accession>
<reference key="1">
    <citation type="submission" date="2005-08" db="EMBL/GenBank/DDBJ databases">
        <title>Complete sequence of chromosome 1 of Synechococcus elongatus PCC 7942.</title>
        <authorList>
            <consortium name="US DOE Joint Genome Institute"/>
            <person name="Copeland A."/>
            <person name="Lucas S."/>
            <person name="Lapidus A."/>
            <person name="Barry K."/>
            <person name="Detter J.C."/>
            <person name="Glavina T."/>
            <person name="Hammon N."/>
            <person name="Israni S."/>
            <person name="Pitluck S."/>
            <person name="Schmutz J."/>
            <person name="Larimer F."/>
            <person name="Land M."/>
            <person name="Kyrpides N."/>
            <person name="Lykidis A."/>
            <person name="Golden S."/>
            <person name="Richardson P."/>
        </authorList>
    </citation>
    <scope>NUCLEOTIDE SEQUENCE [LARGE SCALE GENOMIC DNA]</scope>
    <source>
        <strain>ATCC 33912 / PCC 7942 / FACHB-805</strain>
    </source>
</reference>
<keyword id="KW-0131">Cell cycle</keyword>
<keyword id="KW-0132">Cell division</keyword>
<keyword id="KW-1185">Reference proteome</keyword>
<comment type="function">
    <text evidence="1">Prevents the cell division inhibition by proteins MinC and MinD at internal division sites while permitting inhibition at polar sites. This ensures cell division at the proper site by restricting the formation of a division septum at the midpoint of the long axis of the cell.</text>
</comment>
<comment type="similarity">
    <text evidence="1">Belongs to the MinE family.</text>
</comment>
<gene>
    <name evidence="1" type="primary">minE</name>
    <name type="ordered locus">Synpcc7942_0897</name>
</gene>
<protein>
    <recommendedName>
        <fullName evidence="1">Cell division topological specificity factor</fullName>
    </recommendedName>
</protein>
<proteinExistence type="inferred from homology"/>
<dbReference type="EMBL" id="CP000100">
    <property type="protein sequence ID" value="ABB56927.1"/>
    <property type="molecule type" value="Genomic_DNA"/>
</dbReference>
<dbReference type="RefSeq" id="WP_011242955.1">
    <property type="nucleotide sequence ID" value="NZ_JACJTX010000003.1"/>
</dbReference>
<dbReference type="SMR" id="Q31PU2"/>
<dbReference type="STRING" id="1140.Synpcc7942_0897"/>
<dbReference type="PaxDb" id="1140-Synpcc7942_0897"/>
<dbReference type="GeneID" id="72429746"/>
<dbReference type="KEGG" id="syf:Synpcc7942_0897"/>
<dbReference type="eggNOG" id="COG0851">
    <property type="taxonomic scope" value="Bacteria"/>
</dbReference>
<dbReference type="HOGENOM" id="CLU_137929_1_1_3"/>
<dbReference type="OrthoDB" id="9796578at2"/>
<dbReference type="BioCyc" id="SYNEL:SYNPCC7942_0897-MONOMER"/>
<dbReference type="Proteomes" id="UP000889800">
    <property type="component" value="Chromosome"/>
</dbReference>
<dbReference type="GO" id="GO:0051301">
    <property type="term" value="P:cell division"/>
    <property type="evidence" value="ECO:0007669"/>
    <property type="project" value="UniProtKB-KW"/>
</dbReference>
<dbReference type="GO" id="GO:0032955">
    <property type="term" value="P:regulation of division septum assembly"/>
    <property type="evidence" value="ECO:0007669"/>
    <property type="project" value="InterPro"/>
</dbReference>
<dbReference type="Gene3D" id="3.30.1070.10">
    <property type="entry name" value="Cell division topological specificity factor MinE"/>
    <property type="match status" value="1"/>
</dbReference>
<dbReference type="HAMAP" id="MF_00262">
    <property type="entry name" value="MinE"/>
    <property type="match status" value="1"/>
</dbReference>
<dbReference type="InterPro" id="IPR005527">
    <property type="entry name" value="MinE"/>
</dbReference>
<dbReference type="InterPro" id="IPR036707">
    <property type="entry name" value="MinE_sf"/>
</dbReference>
<dbReference type="NCBIfam" id="TIGR01215">
    <property type="entry name" value="minE"/>
    <property type="match status" value="1"/>
</dbReference>
<dbReference type="NCBIfam" id="NF001422">
    <property type="entry name" value="PRK00296.1"/>
    <property type="match status" value="1"/>
</dbReference>
<dbReference type="Pfam" id="PF03776">
    <property type="entry name" value="MinE"/>
    <property type="match status" value="1"/>
</dbReference>
<dbReference type="SUPFAM" id="SSF55229">
    <property type="entry name" value="Cell division protein MinE topological specificity domain"/>
    <property type="match status" value="1"/>
</dbReference>
<name>MINE_SYNE7</name>
<sequence>MLADLFERLFPRQQASRDTVKQRLKLVLAHDRADLSPELLQKMRQEILEVVSRYVELDSEGMELSLENDQRVTALVANLPIRRVKPATAEG</sequence>